<dbReference type="EMBL" id="X14855">
    <property type="protein sequence ID" value="CAA33005.1"/>
    <property type="molecule type" value="Genomic_DNA"/>
</dbReference>
<dbReference type="EMBL" id="X14717">
    <property type="protein sequence ID" value="CAA32843.1"/>
    <property type="molecule type" value="Genomic_DNA"/>
</dbReference>
<dbReference type="EMBL" id="X14717">
    <property type="protein sequence ID" value="CAA32844.1"/>
    <property type="status" value="ALT_INIT"/>
    <property type="molecule type" value="Genomic_DNA"/>
</dbReference>
<dbReference type="PIR" id="S12849">
    <property type="entry name" value="S12849"/>
</dbReference>
<dbReference type="Proteomes" id="UP000009250">
    <property type="component" value="Genome"/>
</dbReference>
<dbReference type="GO" id="GO:0019028">
    <property type="term" value="C:viral capsid"/>
    <property type="evidence" value="ECO:0007669"/>
    <property type="project" value="UniProtKB-KW"/>
</dbReference>
<keyword id="KW-0167">Capsid protein</keyword>
<keyword id="KW-1185">Reference proteome</keyword>
<keyword id="KW-0946">Virion</keyword>
<accession>P19273</accession>
<accession>Q88915</accession>
<organismHost>
    <name type="scientific">Thermoproteus tenax</name>
    <dbReference type="NCBI Taxonomy" id="2271"/>
</organismHost>
<proteinExistence type="predicted"/>
<evidence type="ECO:0000305" key="1"/>
<comment type="subcellular location">
    <subcellularLocation>
        <location evidence="1">Virion</location>
    </subcellularLocation>
</comment>
<comment type="sequence caution" evidence="1">
    <conflict type="erroneous initiation">
        <sequence resource="EMBL-CDS" id="CAA32844"/>
    </conflict>
</comment>
<feature type="initiator methionine" description="Removed; by host">
    <location>
        <position position="1"/>
    </location>
</feature>
<feature type="chain" id="PRO_0000222955" description="Coat protein TP4">
    <location>
        <begin position="2"/>
        <end position="220"/>
    </location>
</feature>
<sequence length="220" mass="24561">MPSFSTQSITRPSVGVAIGPDGIYRALYGWYGNEQPLEIDKCSYDLSTCSPVVSSGPTIGDGYGGFYDGTNIWFSGSDEANDQGVVASYNPSTGAFNYAYYPGNSTKYVIKIFYYNGYYYLITCCDPGTLLKCTNPLNPSTCTQLNINAPTSFTVQEYYMYTQGSYALLSYFQKNMNNKLFSLCNFDGTNLYNCINIYSTTGILHYLHHSLLEEQYVEII</sequence>
<protein>
    <recommendedName>
        <fullName>Coat protein TP4</fullName>
    </recommendedName>
</protein>
<reference key="1">
    <citation type="journal article" date="1989" name="Nucleic Acids Res.">
        <title>Coat protein TP4 of the virus TTV1: primary structure of the gene and the protein.</title>
        <authorList>
            <person name="Neumann H."/>
            <person name="Zillig W."/>
        </authorList>
    </citation>
    <scope>NUCLEOTIDE SEQUENCE [GENOMIC DNA]</scope>
</reference>
<name>COA4_TTV1K</name>
<organism>
    <name type="scientific">Thermoproteus tenax virus 1 (strain KRA1)</name>
    <name type="common">TTV1</name>
    <dbReference type="NCBI Taxonomy" id="10480"/>
    <lineage>
        <taxon>Viruses</taxon>
        <taxon>Adnaviria</taxon>
        <taxon>Zilligvirae</taxon>
        <taxon>Taleaviricota</taxon>
        <taxon>Tokiviricetes</taxon>
        <taxon>Primavirales</taxon>
        <taxon>Tristromaviridae</taxon>
        <taxon>Betatristromavirus</taxon>
        <taxon>Betatristromavirus TTV1</taxon>
    </lineage>
</organism>